<reference key="1">
    <citation type="journal article" date="2001" name="J. Bacteriol.">
        <title>Genome of the bacterium Streptococcus pneumoniae strain R6.</title>
        <authorList>
            <person name="Hoskins J."/>
            <person name="Alborn W.E. Jr."/>
            <person name="Arnold J."/>
            <person name="Blaszczak L.C."/>
            <person name="Burgett S."/>
            <person name="DeHoff B.S."/>
            <person name="Estrem S.T."/>
            <person name="Fritz L."/>
            <person name="Fu D.-J."/>
            <person name="Fuller W."/>
            <person name="Geringer C."/>
            <person name="Gilmour R."/>
            <person name="Glass J.S."/>
            <person name="Khoja H."/>
            <person name="Kraft A.R."/>
            <person name="Lagace R.E."/>
            <person name="LeBlanc D.J."/>
            <person name="Lee L.N."/>
            <person name="Lefkowitz E.J."/>
            <person name="Lu J."/>
            <person name="Matsushima P."/>
            <person name="McAhren S.M."/>
            <person name="McHenney M."/>
            <person name="McLeaster K."/>
            <person name="Mundy C.W."/>
            <person name="Nicas T.I."/>
            <person name="Norris F.H."/>
            <person name="O'Gara M."/>
            <person name="Peery R.B."/>
            <person name="Robertson G.T."/>
            <person name="Rockey P."/>
            <person name="Sun P.-M."/>
            <person name="Winkler M.E."/>
            <person name="Yang Y."/>
            <person name="Young-Bellido M."/>
            <person name="Zhao G."/>
            <person name="Zook C.A."/>
            <person name="Baltz R.H."/>
            <person name="Jaskunas S.R."/>
            <person name="Rosteck P.R. Jr."/>
            <person name="Skatrud P.L."/>
            <person name="Glass J.I."/>
        </authorList>
    </citation>
    <scope>NUCLEOTIDE SEQUENCE [LARGE SCALE GENOMIC DNA]</scope>
    <source>
        <strain>ATCC BAA-255 / R6</strain>
    </source>
</reference>
<reference key="2">
    <citation type="journal article" date="2006" name="Mol. Cell">
        <title>Acyl-phosphates initiate membrane phospholipid synthesis in Gram-positive pathogens.</title>
        <authorList>
            <person name="Lu Y.-J."/>
            <person name="Zhang Y.-M."/>
            <person name="Grimes K.D."/>
            <person name="Qi J."/>
            <person name="Lee R.E."/>
            <person name="Rock C.O."/>
        </authorList>
    </citation>
    <scope>FUNCTION</scope>
    <scope>CATALYTIC ACTIVITY</scope>
</reference>
<dbReference type="EC" id="2.3.1.n4" evidence="3"/>
<dbReference type="EMBL" id="AE007317">
    <property type="protein sequence ID" value="AAL00269.1"/>
    <property type="molecule type" value="Genomic_DNA"/>
</dbReference>
<dbReference type="PIR" id="H98054">
    <property type="entry name" value="H98054"/>
</dbReference>
<dbReference type="RefSeq" id="NP_359058.1">
    <property type="nucleotide sequence ID" value="NC_003098.1"/>
</dbReference>
<dbReference type="SMR" id="Q8DNY1"/>
<dbReference type="STRING" id="171101.spr1465"/>
<dbReference type="SwissLipids" id="SLP:000001800"/>
<dbReference type="KEGG" id="spr:spr1465"/>
<dbReference type="PATRIC" id="fig|171101.6.peg.1584"/>
<dbReference type="eggNOG" id="COG0204">
    <property type="taxonomic scope" value="Bacteria"/>
</dbReference>
<dbReference type="HOGENOM" id="CLU_027938_4_3_9"/>
<dbReference type="BioCyc" id="MetaCyc:MONOMER-14088"/>
<dbReference type="UniPathway" id="UPA00085"/>
<dbReference type="Proteomes" id="UP000000586">
    <property type="component" value="Chromosome"/>
</dbReference>
<dbReference type="GO" id="GO:0016020">
    <property type="term" value="C:membrane"/>
    <property type="evidence" value="ECO:0007669"/>
    <property type="project" value="UniProtKB-SubCell"/>
</dbReference>
<dbReference type="GO" id="GO:0003841">
    <property type="term" value="F:1-acylglycerol-3-phosphate O-acyltransferase activity"/>
    <property type="evidence" value="ECO:0000318"/>
    <property type="project" value="GO_Central"/>
</dbReference>
<dbReference type="GO" id="GO:0006654">
    <property type="term" value="P:phosphatidic acid biosynthetic process"/>
    <property type="evidence" value="ECO:0000318"/>
    <property type="project" value="GO_Central"/>
</dbReference>
<dbReference type="CDD" id="cd07989">
    <property type="entry name" value="LPLAT_AGPAT-like"/>
    <property type="match status" value="1"/>
</dbReference>
<dbReference type="InterPro" id="IPR002123">
    <property type="entry name" value="Plipid/glycerol_acylTrfase"/>
</dbReference>
<dbReference type="PANTHER" id="PTHR10434">
    <property type="entry name" value="1-ACYL-SN-GLYCEROL-3-PHOSPHATE ACYLTRANSFERASE"/>
    <property type="match status" value="1"/>
</dbReference>
<dbReference type="PANTHER" id="PTHR10434:SF40">
    <property type="entry name" value="1-ACYL-SN-GLYCEROL-3-PHOSPHATE ACYLTRANSFERASE"/>
    <property type="match status" value="1"/>
</dbReference>
<dbReference type="Pfam" id="PF01553">
    <property type="entry name" value="Acyltransferase"/>
    <property type="match status" value="1"/>
</dbReference>
<dbReference type="SMART" id="SM00563">
    <property type="entry name" value="PlsC"/>
    <property type="match status" value="1"/>
</dbReference>
<dbReference type="SUPFAM" id="SSF69593">
    <property type="entry name" value="Glycerol-3-phosphate (1)-acyltransferase"/>
    <property type="match status" value="1"/>
</dbReference>
<protein>
    <recommendedName>
        <fullName>1-acyl-sn-glycerol-3-phosphate acyltransferase</fullName>
        <shortName>1-AGP acyltransferase</shortName>
        <shortName>1-AGPAT</shortName>
        <shortName>1-acyl-G3P acyltransferase</shortName>
        <ecNumber evidence="3">2.3.1.n4</ecNumber>
    </recommendedName>
    <alternativeName>
        <fullName>Lysophosphatidic acid acyltransferase</fullName>
        <shortName>LPAAT</shortName>
    </alternativeName>
    <alternativeName>
        <fullName>Phosphatidic acid synthase</fullName>
        <shortName>PA synthase</shortName>
    </alternativeName>
</protein>
<sequence>MIRYNNNKKTIEGDRMFYTYLRGLVVLLLWSINGNAHYHNTDKIPNQDENYILVAPHRTWWDPVYMAFATKPKQFIFMAKKELFTNRIFGWWIRMCGAFPIDRENPSASAIKYPINVLKKSDRSLIMFPSGSRHSNDVKGGAALIAKMAKVRIMPVTYTGPMTLKGLISRERVDMNFGNPIDISDIKKMNDEGIETVANRIQTEFQRLDEETKQWHNDKKPNPLWWFIRIPALILAIILAILTIIFSFIASFIWNPDKKREELA</sequence>
<proteinExistence type="evidence at protein level"/>
<organism>
    <name type="scientific">Streptococcus pneumoniae (strain ATCC BAA-255 / R6)</name>
    <dbReference type="NCBI Taxonomy" id="171101"/>
    <lineage>
        <taxon>Bacteria</taxon>
        <taxon>Bacillati</taxon>
        <taxon>Bacillota</taxon>
        <taxon>Bacilli</taxon>
        <taxon>Lactobacillales</taxon>
        <taxon>Streptococcaceae</taxon>
        <taxon>Streptococcus</taxon>
    </lineage>
</organism>
<keyword id="KW-0012">Acyltransferase</keyword>
<keyword id="KW-0444">Lipid biosynthesis</keyword>
<keyword id="KW-0443">Lipid metabolism</keyword>
<keyword id="KW-0472">Membrane</keyword>
<keyword id="KW-0594">Phospholipid biosynthesis</keyword>
<keyword id="KW-1208">Phospholipid metabolism</keyword>
<keyword id="KW-1185">Reference proteome</keyword>
<keyword id="KW-0808">Transferase</keyword>
<keyword id="KW-0812">Transmembrane</keyword>
<keyword id="KW-1133">Transmembrane helix</keyword>
<accession>Q8DNY1</accession>
<evidence type="ECO:0000250" key="1"/>
<evidence type="ECO:0000255" key="2"/>
<evidence type="ECO:0000269" key="3">
    <source>
    </source>
</evidence>
<evidence type="ECO:0000305" key="4"/>
<feature type="chain" id="PRO_0000389441" description="1-acyl-sn-glycerol-3-phosphate acyltransferase">
    <location>
        <begin position="1"/>
        <end position="264"/>
    </location>
</feature>
<feature type="transmembrane region" description="Helical" evidence="2">
    <location>
        <begin position="16"/>
        <end position="36"/>
    </location>
</feature>
<feature type="transmembrane region" description="Helical" evidence="2">
    <location>
        <begin position="233"/>
        <end position="253"/>
    </location>
</feature>
<feature type="short sequence motif" description="HXXXXD motif">
    <location>
        <begin position="57"/>
        <end position="62"/>
    </location>
</feature>
<name>PLSC_STRR6</name>
<comment type="function">
    <text evidence="3">Converts lysophosphatidic acid (LPA) into phosphatidic acid (PA) by incorporating an acyl moiety at the 2 position. This enzyme utilizes acyl-ACP as fatty acyl donor, but not acyl-CoA.</text>
</comment>
<comment type="catalytic activity">
    <reaction evidence="3">
        <text>a fatty acyl-[ACP] + a 1-acyl-sn-glycero-3-phosphate = a 1,2-diacyl-sn-glycero-3-phosphate + holo-[ACP]</text>
        <dbReference type="Rhea" id="RHEA:42296"/>
        <dbReference type="Rhea" id="RHEA-COMP:9685"/>
        <dbReference type="Rhea" id="RHEA-COMP:14125"/>
        <dbReference type="ChEBI" id="CHEBI:57970"/>
        <dbReference type="ChEBI" id="CHEBI:58608"/>
        <dbReference type="ChEBI" id="CHEBI:64479"/>
        <dbReference type="ChEBI" id="CHEBI:138651"/>
        <dbReference type="EC" id="2.3.1.n4"/>
    </reaction>
</comment>
<comment type="catalytic activity">
    <reaction evidence="3">
        <text>hexadecanoyl-[ACP] + 1-hexadecanoyl-sn-glycero-3-phosphate = 1,2-dihexadecanoyl-sn-glycero-3-phosphate + holo-[ACP]</text>
        <dbReference type="Rhea" id="RHEA:54972"/>
        <dbReference type="Rhea" id="RHEA-COMP:9652"/>
        <dbReference type="Rhea" id="RHEA-COMP:9685"/>
        <dbReference type="ChEBI" id="CHEBI:57518"/>
        <dbReference type="ChEBI" id="CHEBI:64479"/>
        <dbReference type="ChEBI" id="CHEBI:72859"/>
        <dbReference type="ChEBI" id="CHEBI:78483"/>
    </reaction>
    <physiologicalReaction direction="left-to-right" evidence="3">
        <dbReference type="Rhea" id="RHEA:54973"/>
    </physiologicalReaction>
</comment>
<comment type="pathway">
    <text>Lipid metabolism; phospholipid metabolism.</text>
</comment>
<comment type="subcellular location">
    <subcellularLocation>
        <location evidence="4">Membrane</location>
        <topology evidence="4">Multi-pass membrane protein</topology>
    </subcellularLocation>
</comment>
<comment type="domain">
    <text evidence="1">The HXXXXD motif is essential for acyltransferase activity and may constitute the binding site for the phosphate moiety of the glycerol-3-phosphate.</text>
</comment>
<comment type="similarity">
    <text evidence="4">Belongs to the 1-acyl-sn-glycerol-3-phosphate acyltransferase family.</text>
</comment>
<gene>
    <name type="primary">plsC</name>
    <name type="ordered locus">spr1465</name>
</gene>